<evidence type="ECO:0000255" key="1">
    <source>
        <dbReference type="HAMAP-Rule" id="MF_01369"/>
    </source>
</evidence>
<evidence type="ECO:0000305" key="2"/>
<gene>
    <name evidence="1" type="primary">rplW</name>
    <name evidence="1" type="synonym">rpl23</name>
    <name type="ordered locus">SYNW2069</name>
</gene>
<protein>
    <recommendedName>
        <fullName evidence="1">Large ribosomal subunit protein uL23</fullName>
    </recommendedName>
    <alternativeName>
        <fullName evidence="2">50S ribosomal protein L23</fullName>
    </alternativeName>
</protein>
<keyword id="KW-0687">Ribonucleoprotein</keyword>
<keyword id="KW-0689">Ribosomal protein</keyword>
<keyword id="KW-0694">RNA-binding</keyword>
<keyword id="KW-0699">rRNA-binding</keyword>
<reference key="1">
    <citation type="journal article" date="2003" name="Nature">
        <title>The genome of a motile marine Synechococcus.</title>
        <authorList>
            <person name="Palenik B."/>
            <person name="Brahamsha B."/>
            <person name="Larimer F.W."/>
            <person name="Land M.L."/>
            <person name="Hauser L."/>
            <person name="Chain P."/>
            <person name="Lamerdin J.E."/>
            <person name="Regala W."/>
            <person name="Allen E.E."/>
            <person name="McCarren J."/>
            <person name="Paulsen I.T."/>
            <person name="Dufresne A."/>
            <person name="Partensky F."/>
            <person name="Webb E.A."/>
            <person name="Waterbury J."/>
        </authorList>
    </citation>
    <scope>NUCLEOTIDE SEQUENCE [LARGE SCALE GENOMIC DNA]</scope>
    <source>
        <strain>WH8102</strain>
    </source>
</reference>
<proteinExistence type="inferred from homology"/>
<comment type="function">
    <text evidence="1">One of the early assembly proteins it binds 23S rRNA. One of the proteins that surrounds the polypeptide exit tunnel on the outside of the ribosome. Forms the main docking site for trigger factor binding to the ribosome.</text>
</comment>
<comment type="subunit">
    <text evidence="1">Part of the 50S ribosomal subunit. Contacts protein L29, and trigger factor when it is bound to the ribosome.</text>
</comment>
<comment type="similarity">
    <text evidence="1">Belongs to the universal ribosomal protein uL23 family.</text>
</comment>
<dbReference type="EMBL" id="BX569694">
    <property type="protein sequence ID" value="CAE08584.1"/>
    <property type="molecule type" value="Genomic_DNA"/>
</dbReference>
<dbReference type="RefSeq" id="WP_011128927.1">
    <property type="nucleotide sequence ID" value="NC_005070.1"/>
</dbReference>
<dbReference type="SMR" id="Q7U4J8"/>
<dbReference type="STRING" id="84588.SYNW2069"/>
<dbReference type="KEGG" id="syw:SYNW2069"/>
<dbReference type="eggNOG" id="COG0089">
    <property type="taxonomic scope" value="Bacteria"/>
</dbReference>
<dbReference type="HOGENOM" id="CLU_037562_3_2_3"/>
<dbReference type="Proteomes" id="UP000001422">
    <property type="component" value="Chromosome"/>
</dbReference>
<dbReference type="GO" id="GO:1990904">
    <property type="term" value="C:ribonucleoprotein complex"/>
    <property type="evidence" value="ECO:0007669"/>
    <property type="project" value="UniProtKB-KW"/>
</dbReference>
<dbReference type="GO" id="GO:0005840">
    <property type="term" value="C:ribosome"/>
    <property type="evidence" value="ECO:0007669"/>
    <property type="project" value="UniProtKB-KW"/>
</dbReference>
<dbReference type="GO" id="GO:0019843">
    <property type="term" value="F:rRNA binding"/>
    <property type="evidence" value="ECO:0007669"/>
    <property type="project" value="UniProtKB-UniRule"/>
</dbReference>
<dbReference type="GO" id="GO:0003735">
    <property type="term" value="F:structural constituent of ribosome"/>
    <property type="evidence" value="ECO:0007669"/>
    <property type="project" value="InterPro"/>
</dbReference>
<dbReference type="GO" id="GO:0006412">
    <property type="term" value="P:translation"/>
    <property type="evidence" value="ECO:0007669"/>
    <property type="project" value="UniProtKB-UniRule"/>
</dbReference>
<dbReference type="FunFam" id="3.30.70.330:FF:000001">
    <property type="entry name" value="50S ribosomal protein L23"/>
    <property type="match status" value="1"/>
</dbReference>
<dbReference type="Gene3D" id="3.30.70.330">
    <property type="match status" value="1"/>
</dbReference>
<dbReference type="HAMAP" id="MF_01369_B">
    <property type="entry name" value="Ribosomal_uL23_B"/>
    <property type="match status" value="1"/>
</dbReference>
<dbReference type="InterPro" id="IPR012677">
    <property type="entry name" value="Nucleotide-bd_a/b_plait_sf"/>
</dbReference>
<dbReference type="InterPro" id="IPR013025">
    <property type="entry name" value="Ribosomal_uL23-like"/>
</dbReference>
<dbReference type="InterPro" id="IPR012678">
    <property type="entry name" value="Ribosomal_uL23/eL15/eS24_sf"/>
</dbReference>
<dbReference type="InterPro" id="IPR001014">
    <property type="entry name" value="Ribosomal_uL23_CS"/>
</dbReference>
<dbReference type="NCBIfam" id="NF004363">
    <property type="entry name" value="PRK05738.2-4"/>
    <property type="match status" value="1"/>
</dbReference>
<dbReference type="NCBIfam" id="NF004365">
    <property type="entry name" value="PRK05738.3-1"/>
    <property type="match status" value="1"/>
</dbReference>
<dbReference type="NCBIfam" id="NF004366">
    <property type="entry name" value="PRK05738.3-2"/>
    <property type="match status" value="1"/>
</dbReference>
<dbReference type="NCBIfam" id="NF004368">
    <property type="entry name" value="PRK05738.3-4"/>
    <property type="match status" value="1"/>
</dbReference>
<dbReference type="PANTHER" id="PTHR11620">
    <property type="entry name" value="60S RIBOSOMAL PROTEIN L23A"/>
    <property type="match status" value="1"/>
</dbReference>
<dbReference type="Pfam" id="PF00276">
    <property type="entry name" value="Ribosomal_L23"/>
    <property type="match status" value="1"/>
</dbReference>
<dbReference type="SUPFAM" id="SSF54189">
    <property type="entry name" value="Ribosomal proteins S24e, L23 and L15e"/>
    <property type="match status" value="1"/>
</dbReference>
<dbReference type="PROSITE" id="PS00050">
    <property type="entry name" value="RIBOSOMAL_L23"/>
    <property type="match status" value="1"/>
</dbReference>
<accession>Q7U4J8</accession>
<feature type="chain" id="PRO_0000272860" description="Large ribosomal subunit protein uL23">
    <location>
        <begin position="1"/>
        <end position="100"/>
    </location>
</feature>
<sequence>MTERFQGRLADVIRRPLITEKATRALEFNQYTFEVDHRAAKPDIKAAIEQLFDVKVTGISTMNPPRRTRRMGRFAGKRAQVKKAVVRLAEGNSIQLFPES</sequence>
<organism>
    <name type="scientific">Parasynechococcus marenigrum (strain WH8102)</name>
    <dbReference type="NCBI Taxonomy" id="84588"/>
    <lineage>
        <taxon>Bacteria</taxon>
        <taxon>Bacillati</taxon>
        <taxon>Cyanobacteriota</taxon>
        <taxon>Cyanophyceae</taxon>
        <taxon>Synechococcales</taxon>
        <taxon>Prochlorococcaceae</taxon>
        <taxon>Parasynechococcus</taxon>
        <taxon>Parasynechococcus marenigrum</taxon>
    </lineage>
</organism>
<name>RL23_PARMW</name>